<accession>Q95JC3</accession>
<accession>Q32P98</accession>
<proteinExistence type="inferred from homology"/>
<evidence type="ECO:0000250" key="1"/>
<evidence type="ECO:0000255" key="2"/>
<evidence type="ECO:0000305" key="3"/>
<keyword id="KW-0044">Antibiotic</keyword>
<keyword id="KW-0929">Antimicrobial</keyword>
<keyword id="KW-0165">Cleavage on pair of basic residues</keyword>
<keyword id="KW-1015">Disulfide bond</keyword>
<keyword id="KW-1185">Reference proteome</keyword>
<keyword id="KW-0964">Secreted</keyword>
<keyword id="KW-0732">Signal</keyword>
<feature type="signal peptide" evidence="2">
    <location>
        <begin position="1"/>
        <end position="22"/>
    </location>
</feature>
<feature type="propeptide" id="PRO_0000017351" evidence="2">
    <location>
        <begin position="23"/>
        <end position="37"/>
    </location>
</feature>
<feature type="chain" id="PRO_0000017352" description="Liver-expressed antimicrobial peptide 2">
    <location>
        <begin position="38"/>
        <end position="77"/>
    </location>
</feature>
<feature type="disulfide bond" evidence="1">
    <location>
        <begin position="54"/>
        <end position="65"/>
    </location>
</feature>
<feature type="disulfide bond" evidence="1">
    <location>
        <begin position="60"/>
        <end position="70"/>
    </location>
</feature>
<reference key="1">
    <citation type="journal article" date="2003" name="Protein Sci.">
        <title>Isolation and biochemical characterization of LEAP-2, a novel blood peptide expressed in the liver.</title>
        <authorList>
            <person name="Krause A."/>
            <person name="Sillard R."/>
            <person name="Kleemeier B."/>
            <person name="Kluever E."/>
            <person name="Maronde E."/>
            <person name="Conejo-Garcia J.-R."/>
            <person name="Forssmann W.-G."/>
            <person name="Schulz-Knappe P."/>
            <person name="Nehls M.C."/>
            <person name="Wattler F."/>
            <person name="Wattler S."/>
            <person name="Adermann K."/>
        </authorList>
    </citation>
    <scope>NUCLEOTIDE SEQUENCE [MRNA]</scope>
    <source>
        <tissue>Small intestine</tissue>
    </source>
</reference>
<reference key="2">
    <citation type="submission" date="2005-10" db="EMBL/GenBank/DDBJ databases">
        <authorList>
            <consortium name="NIH - Mammalian Gene Collection (MGC) project"/>
        </authorList>
    </citation>
    <scope>NUCLEOTIDE SEQUENCE [LARGE SCALE MRNA]</scope>
    <source>
        <strain>Crossbred X Angus</strain>
        <tissue>Liver</tissue>
    </source>
</reference>
<comment type="function">
    <text>Has an antimicrobial activity.</text>
</comment>
<comment type="subcellular location">
    <subcellularLocation>
        <location>Secreted</location>
    </subcellularLocation>
</comment>
<comment type="similarity">
    <text evidence="3">Belongs to the LEAP2 family.</text>
</comment>
<organism>
    <name type="scientific">Bos taurus</name>
    <name type="common">Bovine</name>
    <dbReference type="NCBI Taxonomy" id="9913"/>
    <lineage>
        <taxon>Eukaryota</taxon>
        <taxon>Metazoa</taxon>
        <taxon>Chordata</taxon>
        <taxon>Craniata</taxon>
        <taxon>Vertebrata</taxon>
        <taxon>Euteleostomi</taxon>
        <taxon>Mammalia</taxon>
        <taxon>Eutheria</taxon>
        <taxon>Laurasiatheria</taxon>
        <taxon>Artiodactyla</taxon>
        <taxon>Ruminantia</taxon>
        <taxon>Pecora</taxon>
        <taxon>Bovidae</taxon>
        <taxon>Bovinae</taxon>
        <taxon>Bos</taxon>
    </lineage>
</organism>
<gene>
    <name type="primary">LEAP2</name>
</gene>
<sequence>MWHLKLFAVLMICLLLLAQVDGSPIPQQSSAKRRPRRMTPFWRAVSLRPIGASCRDDSECITRLCRKRRCSLSVAQE</sequence>
<protein>
    <recommendedName>
        <fullName>Liver-expressed antimicrobial peptide 2</fullName>
        <shortName>LEAP-2</shortName>
    </recommendedName>
</protein>
<name>LEAP2_BOVIN</name>
<dbReference type="EMBL" id="AJ409014">
    <property type="protein sequence ID" value="CAC51470.1"/>
    <property type="molecule type" value="mRNA"/>
</dbReference>
<dbReference type="EMBL" id="BC108204">
    <property type="protein sequence ID" value="AAI08205.1"/>
    <property type="molecule type" value="mRNA"/>
</dbReference>
<dbReference type="RefSeq" id="NP_776984.1">
    <property type="nucleotide sequence ID" value="NM_174559.4"/>
</dbReference>
<dbReference type="SMR" id="Q95JC3"/>
<dbReference type="FunCoup" id="Q95JC3">
    <property type="interactions" value="53"/>
</dbReference>
<dbReference type="STRING" id="9913.ENSBTAP00000025186"/>
<dbReference type="PaxDb" id="9913-ENSBTAP00000025186"/>
<dbReference type="GeneID" id="282270"/>
<dbReference type="KEGG" id="bta:282270"/>
<dbReference type="CTD" id="116842"/>
<dbReference type="VEuPathDB" id="HostDB:ENSBTAG00000018926"/>
<dbReference type="eggNOG" id="ENOG502SD5B">
    <property type="taxonomic scope" value="Eukaryota"/>
</dbReference>
<dbReference type="HOGENOM" id="CLU_178163_0_0_1"/>
<dbReference type="InParanoid" id="Q95JC3"/>
<dbReference type="OMA" id="CITMLCR"/>
<dbReference type="OrthoDB" id="9450163at2759"/>
<dbReference type="TreeFam" id="TF336274"/>
<dbReference type="Reactome" id="R-BTA-6803157">
    <property type="pathway name" value="Antimicrobial peptides"/>
</dbReference>
<dbReference type="Proteomes" id="UP000009136">
    <property type="component" value="Chromosome 7"/>
</dbReference>
<dbReference type="Bgee" id="ENSBTAG00000018926">
    <property type="expression patterns" value="Expressed in liver and 88 other cell types or tissues"/>
</dbReference>
<dbReference type="GO" id="GO:0005576">
    <property type="term" value="C:extracellular region"/>
    <property type="evidence" value="ECO:0007669"/>
    <property type="project" value="UniProtKB-SubCell"/>
</dbReference>
<dbReference type="GO" id="GO:0042742">
    <property type="term" value="P:defense response to bacterium"/>
    <property type="evidence" value="ECO:0007669"/>
    <property type="project" value="UniProtKB-KW"/>
</dbReference>
<dbReference type="FunFam" id="4.10.40.50:FF:000001">
    <property type="entry name" value="liver-expressed antimicrobial peptide 2"/>
    <property type="match status" value="1"/>
</dbReference>
<dbReference type="Gene3D" id="4.10.40.50">
    <property type="match status" value="1"/>
</dbReference>
<dbReference type="InterPro" id="IPR009955">
    <property type="entry name" value="LEAP-2"/>
</dbReference>
<dbReference type="PANTHER" id="PTHR21007">
    <property type="entry name" value="LIVER EXPRESSED ANTIMICROBIAL PEPTIDE 2"/>
    <property type="match status" value="1"/>
</dbReference>
<dbReference type="PANTHER" id="PTHR21007:SF1">
    <property type="entry name" value="LIVER-EXPRESSED ANTIMICROBIAL PEPTIDE 2"/>
    <property type="match status" value="1"/>
</dbReference>
<dbReference type="Pfam" id="PF07359">
    <property type="entry name" value="LEAP-2"/>
    <property type="match status" value="1"/>
</dbReference>